<sequence length="158" mass="16963">MPIATVCTWPAETEGGSTVVAADHASNYARKLGIQRDQLIQEWGWDEDTDDDIRAAIEEACGGELLDEDTDEVIDVVLLWWRDGDGDLVDTLMDAIGPLAEDGVIWVVTPKTGQPGHVLPAEIAEAAPTAGLMPTSSVNLGNWSASRLVQPKSRAGKR</sequence>
<reference key="1">
    <citation type="journal article" date="2002" name="J. Bacteriol.">
        <title>Whole-genome comparison of Mycobacterium tuberculosis clinical and laboratory strains.</title>
        <authorList>
            <person name="Fleischmann R.D."/>
            <person name="Alland D."/>
            <person name="Eisen J.A."/>
            <person name="Carpenter L."/>
            <person name="White O."/>
            <person name="Peterson J.D."/>
            <person name="DeBoy R.T."/>
            <person name="Dodson R.J."/>
            <person name="Gwinn M.L."/>
            <person name="Haft D.H."/>
            <person name="Hickey E.K."/>
            <person name="Kolonay J.F."/>
            <person name="Nelson W.C."/>
            <person name="Umayam L.A."/>
            <person name="Ermolaeva M.D."/>
            <person name="Salzberg S.L."/>
            <person name="Delcher A."/>
            <person name="Utterback T.R."/>
            <person name="Weidman J.F."/>
            <person name="Khouri H.M."/>
            <person name="Gill J."/>
            <person name="Mikula A."/>
            <person name="Bishai W."/>
            <person name="Jacobs W.R. Jr."/>
            <person name="Venter J.C."/>
            <person name="Fraser C.M."/>
        </authorList>
    </citation>
    <scope>NUCLEOTIDE SEQUENCE [LARGE SCALE GENOMIC DNA]</scope>
    <source>
        <strain>CDC 1551 / Oshkosh</strain>
    </source>
</reference>
<organism>
    <name type="scientific">Mycobacterium tuberculosis (strain CDC 1551 / Oshkosh)</name>
    <dbReference type="NCBI Taxonomy" id="83331"/>
    <lineage>
        <taxon>Bacteria</taxon>
        <taxon>Bacillati</taxon>
        <taxon>Actinomycetota</taxon>
        <taxon>Actinomycetes</taxon>
        <taxon>Mycobacteriales</taxon>
        <taxon>Mycobacteriaceae</taxon>
        <taxon>Mycobacterium</taxon>
        <taxon>Mycobacterium tuberculosis complex</taxon>
    </lineage>
</organism>
<name>Y2239_MYCTO</name>
<protein>
    <recommendedName>
        <fullName>Uncharacterized protein MT2299</fullName>
    </recommendedName>
</protein>
<proteinExistence type="predicted"/>
<dbReference type="EMBL" id="AE000516">
    <property type="protein sequence ID" value="AAK46583.1"/>
    <property type="molecule type" value="Genomic_DNA"/>
</dbReference>
<dbReference type="PIR" id="C70778">
    <property type="entry name" value="C70778"/>
</dbReference>
<dbReference type="KEGG" id="mtc:MT2299"/>
<dbReference type="PATRIC" id="fig|83331.31.peg.2476"/>
<dbReference type="HOGENOM" id="CLU_117223_1_0_11"/>
<dbReference type="Proteomes" id="UP000001020">
    <property type="component" value="Chromosome"/>
</dbReference>
<dbReference type="InterPro" id="IPR021412">
    <property type="entry name" value="DUF3052"/>
</dbReference>
<dbReference type="Pfam" id="PF11253">
    <property type="entry name" value="DUF3052"/>
    <property type="match status" value="1"/>
</dbReference>
<feature type="chain" id="PRO_0000427481" description="Uncharacterized protein MT2299">
    <location>
        <begin position="1"/>
        <end position="158"/>
    </location>
</feature>
<gene>
    <name type="ordered locus">MT2299</name>
</gene>
<keyword id="KW-1185">Reference proteome</keyword>
<accession>P9WLG8</accession>
<accession>L0T912</accession>
<accession>P64959</accession>
<accession>Q10521</accession>